<accession>B5EZ28</accession>
<comment type="function">
    <text evidence="1">Functions in the biosynthesis of branched-chain amino acids. Catalyzes the dehydration of (2R,3R)-2,3-dihydroxy-3-methylpentanoate (2,3-dihydroxy-3-methylvalerate) into 2-oxo-3-methylpentanoate (2-oxo-3-methylvalerate) and of (2R)-2,3-dihydroxy-3-methylbutanoate (2,3-dihydroxyisovalerate) into 2-oxo-3-methylbutanoate (2-oxoisovalerate), the penultimate precursor to L-isoleucine and L-valine, respectively.</text>
</comment>
<comment type="catalytic activity">
    <reaction evidence="1">
        <text>(2R)-2,3-dihydroxy-3-methylbutanoate = 3-methyl-2-oxobutanoate + H2O</text>
        <dbReference type="Rhea" id="RHEA:24809"/>
        <dbReference type="ChEBI" id="CHEBI:11851"/>
        <dbReference type="ChEBI" id="CHEBI:15377"/>
        <dbReference type="ChEBI" id="CHEBI:49072"/>
        <dbReference type="EC" id="4.2.1.9"/>
    </reaction>
    <physiologicalReaction direction="left-to-right" evidence="1">
        <dbReference type="Rhea" id="RHEA:24810"/>
    </physiologicalReaction>
</comment>
<comment type="catalytic activity">
    <reaction evidence="1">
        <text>(2R,3R)-2,3-dihydroxy-3-methylpentanoate = (S)-3-methyl-2-oxopentanoate + H2O</text>
        <dbReference type="Rhea" id="RHEA:27694"/>
        <dbReference type="ChEBI" id="CHEBI:15377"/>
        <dbReference type="ChEBI" id="CHEBI:35146"/>
        <dbReference type="ChEBI" id="CHEBI:49258"/>
        <dbReference type="EC" id="4.2.1.9"/>
    </reaction>
    <physiologicalReaction direction="left-to-right" evidence="1">
        <dbReference type="Rhea" id="RHEA:27695"/>
    </physiologicalReaction>
</comment>
<comment type="cofactor">
    <cofactor evidence="1">
        <name>[2Fe-2S] cluster</name>
        <dbReference type="ChEBI" id="CHEBI:190135"/>
    </cofactor>
    <text evidence="1">Binds 1 [2Fe-2S] cluster per subunit. This cluster acts as a Lewis acid cofactor.</text>
</comment>
<comment type="cofactor">
    <cofactor evidence="1">
        <name>Mg(2+)</name>
        <dbReference type="ChEBI" id="CHEBI:18420"/>
    </cofactor>
</comment>
<comment type="pathway">
    <text evidence="1">Amino-acid biosynthesis; L-isoleucine biosynthesis; L-isoleucine from 2-oxobutanoate: step 3/4.</text>
</comment>
<comment type="pathway">
    <text evidence="1">Amino-acid biosynthesis; L-valine biosynthesis; L-valine from pyruvate: step 3/4.</text>
</comment>
<comment type="subunit">
    <text evidence="1">Homodimer.</text>
</comment>
<comment type="similarity">
    <text evidence="1">Belongs to the IlvD/Edd family.</text>
</comment>
<protein>
    <recommendedName>
        <fullName evidence="1">Dihydroxy-acid dehydratase</fullName>
        <shortName evidence="1">DAD</shortName>
        <ecNumber evidence="1">4.2.1.9</ecNumber>
    </recommendedName>
</protein>
<keyword id="KW-0001">2Fe-2S</keyword>
<keyword id="KW-0028">Amino-acid biosynthesis</keyword>
<keyword id="KW-0100">Branched-chain amino acid biosynthesis</keyword>
<keyword id="KW-0408">Iron</keyword>
<keyword id="KW-0411">Iron-sulfur</keyword>
<keyword id="KW-0456">Lyase</keyword>
<keyword id="KW-0460">Magnesium</keyword>
<keyword id="KW-0479">Metal-binding</keyword>
<name>ILVD_SALA4</name>
<feature type="chain" id="PRO_1000089405" description="Dihydroxy-acid dehydratase">
    <location>
        <begin position="1"/>
        <end position="616"/>
    </location>
</feature>
<feature type="active site" description="Proton acceptor" evidence="1">
    <location>
        <position position="517"/>
    </location>
</feature>
<feature type="binding site" evidence="1">
    <location>
        <position position="81"/>
    </location>
    <ligand>
        <name>Mg(2+)</name>
        <dbReference type="ChEBI" id="CHEBI:18420"/>
    </ligand>
</feature>
<feature type="binding site" evidence="1">
    <location>
        <position position="122"/>
    </location>
    <ligand>
        <name>[2Fe-2S] cluster</name>
        <dbReference type="ChEBI" id="CHEBI:190135"/>
    </ligand>
</feature>
<feature type="binding site" evidence="1">
    <location>
        <position position="123"/>
    </location>
    <ligand>
        <name>Mg(2+)</name>
        <dbReference type="ChEBI" id="CHEBI:18420"/>
    </ligand>
</feature>
<feature type="binding site" description="via carbamate group" evidence="1">
    <location>
        <position position="124"/>
    </location>
    <ligand>
        <name>Mg(2+)</name>
        <dbReference type="ChEBI" id="CHEBI:18420"/>
    </ligand>
</feature>
<feature type="binding site" evidence="1">
    <location>
        <position position="195"/>
    </location>
    <ligand>
        <name>[2Fe-2S] cluster</name>
        <dbReference type="ChEBI" id="CHEBI:190135"/>
    </ligand>
</feature>
<feature type="binding site" evidence="1">
    <location>
        <position position="491"/>
    </location>
    <ligand>
        <name>Mg(2+)</name>
        <dbReference type="ChEBI" id="CHEBI:18420"/>
    </ligand>
</feature>
<feature type="modified residue" description="N6-carboxylysine" evidence="1">
    <location>
        <position position="124"/>
    </location>
</feature>
<organism>
    <name type="scientific">Salmonella agona (strain SL483)</name>
    <dbReference type="NCBI Taxonomy" id="454166"/>
    <lineage>
        <taxon>Bacteria</taxon>
        <taxon>Pseudomonadati</taxon>
        <taxon>Pseudomonadota</taxon>
        <taxon>Gammaproteobacteria</taxon>
        <taxon>Enterobacterales</taxon>
        <taxon>Enterobacteriaceae</taxon>
        <taxon>Salmonella</taxon>
    </lineage>
</organism>
<evidence type="ECO:0000255" key="1">
    <source>
        <dbReference type="HAMAP-Rule" id="MF_00012"/>
    </source>
</evidence>
<reference key="1">
    <citation type="journal article" date="2011" name="J. Bacteriol.">
        <title>Comparative genomics of 28 Salmonella enterica isolates: evidence for CRISPR-mediated adaptive sublineage evolution.</title>
        <authorList>
            <person name="Fricke W.F."/>
            <person name="Mammel M.K."/>
            <person name="McDermott P.F."/>
            <person name="Tartera C."/>
            <person name="White D.G."/>
            <person name="Leclerc J.E."/>
            <person name="Ravel J."/>
            <person name="Cebula T.A."/>
        </authorList>
    </citation>
    <scope>NUCLEOTIDE SEQUENCE [LARGE SCALE GENOMIC DNA]</scope>
    <source>
        <strain>SL483</strain>
    </source>
</reference>
<dbReference type="EC" id="4.2.1.9" evidence="1"/>
<dbReference type="EMBL" id="CP001138">
    <property type="protein sequence ID" value="ACH49483.1"/>
    <property type="molecule type" value="Genomic_DNA"/>
</dbReference>
<dbReference type="RefSeq" id="WP_001127434.1">
    <property type="nucleotide sequence ID" value="NC_011149.1"/>
</dbReference>
<dbReference type="SMR" id="B5EZ28"/>
<dbReference type="KEGG" id="sea:SeAg_B4129"/>
<dbReference type="HOGENOM" id="CLU_014271_4_2_6"/>
<dbReference type="UniPathway" id="UPA00047">
    <property type="reaction ID" value="UER00057"/>
</dbReference>
<dbReference type="UniPathway" id="UPA00049">
    <property type="reaction ID" value="UER00061"/>
</dbReference>
<dbReference type="Proteomes" id="UP000008819">
    <property type="component" value="Chromosome"/>
</dbReference>
<dbReference type="GO" id="GO:0005829">
    <property type="term" value="C:cytosol"/>
    <property type="evidence" value="ECO:0007669"/>
    <property type="project" value="TreeGrafter"/>
</dbReference>
<dbReference type="GO" id="GO:0051537">
    <property type="term" value="F:2 iron, 2 sulfur cluster binding"/>
    <property type="evidence" value="ECO:0007669"/>
    <property type="project" value="UniProtKB-UniRule"/>
</dbReference>
<dbReference type="GO" id="GO:0004160">
    <property type="term" value="F:dihydroxy-acid dehydratase activity"/>
    <property type="evidence" value="ECO:0007669"/>
    <property type="project" value="UniProtKB-UniRule"/>
</dbReference>
<dbReference type="GO" id="GO:0000287">
    <property type="term" value="F:magnesium ion binding"/>
    <property type="evidence" value="ECO:0007669"/>
    <property type="project" value="UniProtKB-UniRule"/>
</dbReference>
<dbReference type="GO" id="GO:0009097">
    <property type="term" value="P:isoleucine biosynthetic process"/>
    <property type="evidence" value="ECO:0007669"/>
    <property type="project" value="UniProtKB-UniRule"/>
</dbReference>
<dbReference type="GO" id="GO:0009099">
    <property type="term" value="P:L-valine biosynthetic process"/>
    <property type="evidence" value="ECO:0007669"/>
    <property type="project" value="UniProtKB-UniRule"/>
</dbReference>
<dbReference type="FunFam" id="3.50.30.80:FF:000001">
    <property type="entry name" value="Dihydroxy-acid dehydratase"/>
    <property type="match status" value="1"/>
</dbReference>
<dbReference type="Gene3D" id="3.50.30.80">
    <property type="entry name" value="IlvD/EDD C-terminal domain-like"/>
    <property type="match status" value="1"/>
</dbReference>
<dbReference type="HAMAP" id="MF_00012">
    <property type="entry name" value="IlvD"/>
    <property type="match status" value="1"/>
</dbReference>
<dbReference type="InterPro" id="IPR042096">
    <property type="entry name" value="Dihydro-acid_dehy_C"/>
</dbReference>
<dbReference type="InterPro" id="IPR004404">
    <property type="entry name" value="DihydroxyA_deHydtase"/>
</dbReference>
<dbReference type="InterPro" id="IPR020558">
    <property type="entry name" value="DiOHA_6PGluconate_deHydtase_CS"/>
</dbReference>
<dbReference type="InterPro" id="IPR056740">
    <property type="entry name" value="ILV_EDD_C"/>
</dbReference>
<dbReference type="InterPro" id="IPR000581">
    <property type="entry name" value="ILV_EDD_N"/>
</dbReference>
<dbReference type="InterPro" id="IPR037237">
    <property type="entry name" value="IlvD/EDD_N"/>
</dbReference>
<dbReference type="NCBIfam" id="TIGR00110">
    <property type="entry name" value="ilvD"/>
    <property type="match status" value="1"/>
</dbReference>
<dbReference type="NCBIfam" id="NF009103">
    <property type="entry name" value="PRK12448.1"/>
    <property type="match status" value="1"/>
</dbReference>
<dbReference type="PANTHER" id="PTHR43661">
    <property type="entry name" value="D-XYLONATE DEHYDRATASE"/>
    <property type="match status" value="1"/>
</dbReference>
<dbReference type="PANTHER" id="PTHR43661:SF3">
    <property type="entry name" value="D-XYLONATE DEHYDRATASE YAGF-RELATED"/>
    <property type="match status" value="1"/>
</dbReference>
<dbReference type="Pfam" id="PF24877">
    <property type="entry name" value="ILV_EDD_C"/>
    <property type="match status" value="1"/>
</dbReference>
<dbReference type="Pfam" id="PF00920">
    <property type="entry name" value="ILVD_EDD_N"/>
    <property type="match status" value="1"/>
</dbReference>
<dbReference type="SUPFAM" id="SSF143975">
    <property type="entry name" value="IlvD/EDD N-terminal domain-like"/>
    <property type="match status" value="1"/>
</dbReference>
<dbReference type="SUPFAM" id="SSF52016">
    <property type="entry name" value="LeuD/IlvD-like"/>
    <property type="match status" value="1"/>
</dbReference>
<dbReference type="PROSITE" id="PS00886">
    <property type="entry name" value="ILVD_EDD_1"/>
    <property type="match status" value="1"/>
</dbReference>
<dbReference type="PROSITE" id="PS00887">
    <property type="entry name" value="ILVD_EDD_2"/>
    <property type="match status" value="1"/>
</dbReference>
<proteinExistence type="inferred from homology"/>
<sequence>MPKYRSATTTHGRNMAGARALWRATGMTDSDFGKPIIAVVNSFTQFVPGHVHLRDLGKLVAEQIEASGGVAKEFNTIAVDDGIAMGHGGMLYSLPSRELIADSVEYMVNAHCADAMVCISNCDKITPGMLMASLRLNIPVIFVSGGPMEAGKTKLSDKIIKLDLVDAMIQGADPKVSDDQSNQVERSACPTCGSCSGMFTANSMNCLTEALGLSQPGNGSLLATHADRKQLFLNAGKRIVELTKRYYEQNDESALPRNIASKAAFENAMTLDIAMGGSTNTVLHLLAAAQEAEIDFTMSDIDKLSRKVPQLCKVAPSTQKYHMEDVHRAGGVLGILGELDRAGLLNRNVKNVLGLTLPQTLEQYDITVTQDEAVKKMFRAGPAGIRTTQAFSQDCRWDSLDDDRAAGCIRSLEYAYSKDGGLAVLYGNFAENGCIVKTAGVDDSILKFTGPAKVYESQDDAVEAILGGKVVEGDVVVIRYEGPKGGPGMQEMLYPTSFLKSMGLGKACALITDGRFSGGTSGLSIGHVSPEAASGGTIALIEDGDTIAIDIPNRSIQLQLSEAEIAARREAQEARGDKAWTPKNRQRQVSFALRAYASLATSADKGAVRDKSKLGG</sequence>
<gene>
    <name evidence="1" type="primary">ilvD</name>
    <name type="ordered locus">SeAg_B4129</name>
</gene>